<proteinExistence type="inferred from homology"/>
<feature type="chain" id="PRO_0000062740" description="Cell division protein FtsA">
    <location>
        <begin position="1"/>
        <end position="492"/>
    </location>
</feature>
<feature type="region of interest" description="Disordered" evidence="2">
    <location>
        <begin position="288"/>
        <end position="307"/>
    </location>
</feature>
<feature type="region of interest" description="Disordered" evidence="2">
    <location>
        <begin position="429"/>
        <end position="458"/>
    </location>
</feature>
<feature type="compositionally biased region" description="Polar residues" evidence="2">
    <location>
        <begin position="291"/>
        <end position="303"/>
    </location>
</feature>
<feature type="compositionally biased region" description="Low complexity" evidence="2">
    <location>
        <begin position="436"/>
        <end position="447"/>
    </location>
</feature>
<name>FTSA_HELPY</name>
<protein>
    <recommendedName>
        <fullName evidence="1">Cell division protein FtsA</fullName>
    </recommendedName>
</protein>
<evidence type="ECO:0000255" key="1">
    <source>
        <dbReference type="HAMAP-Rule" id="MF_02033"/>
    </source>
</evidence>
<evidence type="ECO:0000256" key="2">
    <source>
        <dbReference type="SAM" id="MobiDB-lite"/>
    </source>
</evidence>
<keyword id="KW-0131">Cell cycle</keyword>
<keyword id="KW-0132">Cell division</keyword>
<keyword id="KW-0997">Cell inner membrane</keyword>
<keyword id="KW-1003">Cell membrane</keyword>
<keyword id="KW-0472">Membrane</keyword>
<keyword id="KW-1185">Reference proteome</keyword>
<accession>O25629</accession>
<organism>
    <name type="scientific">Helicobacter pylori (strain ATCC 700392 / 26695)</name>
    <name type="common">Campylobacter pylori</name>
    <dbReference type="NCBI Taxonomy" id="85962"/>
    <lineage>
        <taxon>Bacteria</taxon>
        <taxon>Pseudomonadati</taxon>
        <taxon>Campylobacterota</taxon>
        <taxon>Epsilonproteobacteria</taxon>
        <taxon>Campylobacterales</taxon>
        <taxon>Helicobacteraceae</taxon>
        <taxon>Helicobacter</taxon>
    </lineage>
</organism>
<sequence length="492" mass="54493">MEHKEIVIGVDLGSRKICAIVAEFKEGILRIIGTAHQDSKEINSKAIKRGRINSLAHASNAIKEVINSAKKMAGLNADEDRNNPMPHFGEYHPKTKAIVSFSGAYTESIRDVTGVASTKDNVVTIDEINRAINSACAKAGLDNDKHILHALPYRFTLDKQEVNDPLGMSGTRLEVFIHIVYTEKNNIENLEKIMIQSGVEIENIVINSYAASIATLSNDERELGVACVDMGGETCNLTIYSGNSIRYNKYLPVGSHHLTTDLSHMLNTPFPYAEEVKIKYGDLSFEGGEETPSQNVQIPTTGSDGHESHIVPLSEIQTIMRERALETFKIIHRSIQDSGLEEHLGGGVVLTGGMALMKGIKELARTHFTNYPVRLAAPVEKYNIMGMFEDLKDPRFSVVVGLILYKAGGHTNYERDSKGVIRYHESDDYTRTAHQSSPTPHIHSSPTERNLSDLKAPSAPLNTAKNDDFLPIKPTEQKGFFKSFLDKISKFF</sequence>
<dbReference type="EMBL" id="AE000511">
    <property type="protein sequence ID" value="AAD08024.1"/>
    <property type="molecule type" value="Genomic_DNA"/>
</dbReference>
<dbReference type="PIR" id="B64642">
    <property type="entry name" value="B64642"/>
</dbReference>
<dbReference type="RefSeq" id="NP_207769.1">
    <property type="nucleotide sequence ID" value="NC_000915.1"/>
</dbReference>
<dbReference type="SMR" id="O25629"/>
<dbReference type="DIP" id="DIP-3124N"/>
<dbReference type="FunCoup" id="O25629">
    <property type="interactions" value="166"/>
</dbReference>
<dbReference type="IntAct" id="O25629">
    <property type="interactions" value="8"/>
</dbReference>
<dbReference type="MINT" id="O25629"/>
<dbReference type="STRING" id="85962.HP_0978"/>
<dbReference type="PaxDb" id="85962-C694_05035"/>
<dbReference type="DNASU" id="899510"/>
<dbReference type="EnsemblBacteria" id="AAD08024">
    <property type="protein sequence ID" value="AAD08024"/>
    <property type="gene ID" value="HP_0978"/>
</dbReference>
<dbReference type="KEGG" id="heo:C694_05035"/>
<dbReference type="KEGG" id="hpy:HP_0978"/>
<dbReference type="PATRIC" id="fig|85962.47.peg.1046"/>
<dbReference type="eggNOG" id="COG0849">
    <property type="taxonomic scope" value="Bacteria"/>
</dbReference>
<dbReference type="InParanoid" id="O25629"/>
<dbReference type="OrthoDB" id="9810567at2"/>
<dbReference type="PhylomeDB" id="O25629"/>
<dbReference type="Proteomes" id="UP000000429">
    <property type="component" value="Chromosome"/>
</dbReference>
<dbReference type="GO" id="GO:0032153">
    <property type="term" value="C:cell division site"/>
    <property type="evidence" value="ECO:0000318"/>
    <property type="project" value="GO_Central"/>
</dbReference>
<dbReference type="GO" id="GO:0009898">
    <property type="term" value="C:cytoplasmic side of plasma membrane"/>
    <property type="evidence" value="ECO:0000318"/>
    <property type="project" value="GO_Central"/>
</dbReference>
<dbReference type="GO" id="GO:0051301">
    <property type="term" value="P:cell division"/>
    <property type="evidence" value="ECO:0000318"/>
    <property type="project" value="GO_Central"/>
</dbReference>
<dbReference type="GO" id="GO:0043093">
    <property type="term" value="P:FtsZ-dependent cytokinesis"/>
    <property type="evidence" value="ECO:0007669"/>
    <property type="project" value="UniProtKB-UniRule"/>
</dbReference>
<dbReference type="CDD" id="cd24048">
    <property type="entry name" value="ASKHA_NBD_FtsA"/>
    <property type="match status" value="1"/>
</dbReference>
<dbReference type="FunFam" id="3.30.420.40:FF:000481">
    <property type="entry name" value="Cell division protein FtsA"/>
    <property type="match status" value="1"/>
</dbReference>
<dbReference type="Gene3D" id="3.30.1490.110">
    <property type="match status" value="1"/>
</dbReference>
<dbReference type="Gene3D" id="3.30.420.40">
    <property type="match status" value="1"/>
</dbReference>
<dbReference type="HAMAP" id="MF_02033">
    <property type="entry name" value="FtsA"/>
    <property type="match status" value="1"/>
</dbReference>
<dbReference type="InterPro" id="IPR043129">
    <property type="entry name" value="ATPase_NBD"/>
</dbReference>
<dbReference type="InterPro" id="IPR020823">
    <property type="entry name" value="Cell_div_FtsA"/>
</dbReference>
<dbReference type="InterPro" id="IPR050696">
    <property type="entry name" value="FtsA/MreB"/>
</dbReference>
<dbReference type="InterPro" id="IPR003494">
    <property type="entry name" value="SHS2_FtsA"/>
</dbReference>
<dbReference type="NCBIfam" id="TIGR01174">
    <property type="entry name" value="ftsA"/>
    <property type="match status" value="1"/>
</dbReference>
<dbReference type="PANTHER" id="PTHR32432:SF4">
    <property type="entry name" value="CELL DIVISION PROTEIN FTSA"/>
    <property type="match status" value="1"/>
</dbReference>
<dbReference type="PANTHER" id="PTHR32432">
    <property type="entry name" value="CELL DIVISION PROTEIN FTSA-RELATED"/>
    <property type="match status" value="1"/>
</dbReference>
<dbReference type="Pfam" id="PF14450">
    <property type="entry name" value="FtsA"/>
    <property type="match status" value="1"/>
</dbReference>
<dbReference type="Pfam" id="PF02491">
    <property type="entry name" value="SHS2_FTSA"/>
    <property type="match status" value="1"/>
</dbReference>
<dbReference type="SMART" id="SM00842">
    <property type="entry name" value="FtsA"/>
    <property type="match status" value="1"/>
</dbReference>
<dbReference type="SUPFAM" id="SSF53067">
    <property type="entry name" value="Actin-like ATPase domain"/>
    <property type="match status" value="2"/>
</dbReference>
<comment type="function">
    <text evidence="1">Cell division protein that is involved in the assembly of the Z ring. May serve as a membrane anchor for the Z ring.</text>
</comment>
<comment type="subunit">
    <text evidence="1">Self-interacts. Interacts with FtsZ.</text>
</comment>
<comment type="subcellular location">
    <subcellularLocation>
        <location evidence="1">Cell inner membrane</location>
        <topology evidence="1">Peripheral membrane protein</topology>
        <orientation evidence="1">Cytoplasmic side</orientation>
    </subcellularLocation>
    <text evidence="1">Localizes to the Z ring in an FtsZ-dependent manner. Targeted to the membrane through a conserved C-terminal amphipathic helix.</text>
</comment>
<comment type="similarity">
    <text evidence="1">Belongs to the FtsA/MreB family.</text>
</comment>
<reference key="1">
    <citation type="journal article" date="1997" name="Nature">
        <title>The complete genome sequence of the gastric pathogen Helicobacter pylori.</title>
        <authorList>
            <person name="Tomb J.-F."/>
            <person name="White O."/>
            <person name="Kerlavage A.R."/>
            <person name="Clayton R.A."/>
            <person name="Sutton G.G."/>
            <person name="Fleischmann R.D."/>
            <person name="Ketchum K.A."/>
            <person name="Klenk H.-P."/>
            <person name="Gill S.R."/>
            <person name="Dougherty B.A."/>
            <person name="Nelson K.E."/>
            <person name="Quackenbush J."/>
            <person name="Zhou L."/>
            <person name="Kirkness E.F."/>
            <person name="Peterson S.N."/>
            <person name="Loftus B.J."/>
            <person name="Richardson D.L."/>
            <person name="Dodson R.J."/>
            <person name="Khalak H.G."/>
            <person name="Glodek A."/>
            <person name="McKenney K."/>
            <person name="FitzGerald L.M."/>
            <person name="Lee N."/>
            <person name="Adams M.D."/>
            <person name="Hickey E.K."/>
            <person name="Berg D.E."/>
            <person name="Gocayne J.D."/>
            <person name="Utterback T.R."/>
            <person name="Peterson J.D."/>
            <person name="Kelley J.M."/>
            <person name="Cotton M.D."/>
            <person name="Weidman J.F."/>
            <person name="Fujii C."/>
            <person name="Bowman C."/>
            <person name="Watthey L."/>
            <person name="Wallin E."/>
            <person name="Hayes W.S."/>
            <person name="Borodovsky M."/>
            <person name="Karp P.D."/>
            <person name="Smith H.O."/>
            <person name="Fraser C.M."/>
            <person name="Venter J.C."/>
        </authorList>
    </citation>
    <scope>NUCLEOTIDE SEQUENCE [LARGE SCALE GENOMIC DNA]</scope>
    <source>
        <strain>ATCC 700392 / 26695</strain>
    </source>
</reference>
<gene>
    <name evidence="1" type="primary">ftsA</name>
    <name type="ordered locus">HP_0978</name>
</gene>